<feature type="chain" id="PRO_0000210598" description="Uncharacterized protein MG414">
    <location>
        <begin position="1"/>
        <end position="1036"/>
    </location>
</feature>
<feature type="transmembrane region" description="Helical" evidence="1">
    <location>
        <begin position="4"/>
        <end position="24"/>
    </location>
</feature>
<feature type="transmembrane region" description="Helical" evidence="1">
    <location>
        <begin position="1004"/>
        <end position="1024"/>
    </location>
</feature>
<feature type="sequence conflict" description="In Ref. 2." evidence="2" ref="2">
    <original>LEPT</original>
    <variation>SRAS</variation>
    <location>
        <begin position="733"/>
        <end position="736"/>
    </location>
</feature>
<organism>
    <name type="scientific">Mycoplasma genitalium (strain ATCC 33530 / DSM 19775 / NCTC 10195 / G37)</name>
    <name type="common">Mycoplasmoides genitalium</name>
    <dbReference type="NCBI Taxonomy" id="243273"/>
    <lineage>
        <taxon>Bacteria</taxon>
        <taxon>Bacillati</taxon>
        <taxon>Mycoplasmatota</taxon>
        <taxon>Mycoplasmoidales</taxon>
        <taxon>Mycoplasmoidaceae</taxon>
        <taxon>Mycoplasmoides</taxon>
    </lineage>
</organism>
<proteinExistence type="inferred from homology"/>
<reference key="1">
    <citation type="journal article" date="1995" name="Science">
        <title>The minimal gene complement of Mycoplasma genitalium.</title>
        <authorList>
            <person name="Fraser C.M."/>
            <person name="Gocayne J.D."/>
            <person name="White O."/>
            <person name="Adams M.D."/>
            <person name="Clayton R.A."/>
            <person name="Fleischmann R.D."/>
            <person name="Bult C.J."/>
            <person name="Kerlavage A.R."/>
            <person name="Sutton G.G."/>
            <person name="Kelley J.M."/>
            <person name="Fritchman J.L."/>
            <person name="Weidman J.F."/>
            <person name="Small K.V."/>
            <person name="Sandusky M."/>
            <person name="Fuhrmann J.L."/>
            <person name="Nguyen D.T."/>
            <person name="Utterback T.R."/>
            <person name="Saudek D.M."/>
            <person name="Phillips C.A."/>
            <person name="Merrick J.M."/>
            <person name="Tomb J.-F."/>
            <person name="Dougherty B.A."/>
            <person name="Bott K.F."/>
            <person name="Hu P.-C."/>
            <person name="Lucier T.S."/>
            <person name="Peterson S.N."/>
            <person name="Smith H.O."/>
            <person name="Hutchison C.A. III"/>
            <person name="Venter J.C."/>
        </authorList>
    </citation>
    <scope>NUCLEOTIDE SEQUENCE [LARGE SCALE GENOMIC DNA]</scope>
    <source>
        <strain>ATCC 33530 / DSM 19775 / NCTC 10195 / G37</strain>
    </source>
</reference>
<reference key="2">
    <citation type="journal article" date="1993" name="J. Bacteriol.">
        <title>A survey of the Mycoplasma genitalium genome by using random sequencing.</title>
        <authorList>
            <person name="Peterson S.N."/>
            <person name="Hu P.-C."/>
            <person name="Bott K.F."/>
            <person name="Hutchison C.A. III"/>
        </authorList>
    </citation>
    <scope>NUCLEOTIDE SEQUENCE [GENOMIC DNA] OF 52-146 AND 733-833</scope>
    <source>
        <strain>ATCC 33530 / DSM 19775 / NCTC 10195 / G37</strain>
    </source>
</reference>
<accession>P47653</accession>
<accession>P47654</accession>
<accession>Q49457</accession>
<protein>
    <recommendedName>
        <fullName>Uncharacterized protein MG414</fullName>
    </recommendedName>
</protein>
<gene>
    <name type="ordered locus">MG414</name>
</gene>
<keyword id="KW-1003">Cell membrane</keyword>
<keyword id="KW-0472">Membrane</keyword>
<keyword id="KW-1185">Reference proteome</keyword>
<keyword id="KW-0812">Transmembrane</keyword>
<keyword id="KW-1133">Transmembrane helix</keyword>
<evidence type="ECO:0000255" key="1"/>
<evidence type="ECO:0000305" key="2"/>
<sequence>MRSYLFIPLLVSFLFPVALANASLEKNLVDTNLYLSPNTIQNRSYTAGFNLKNDYFRKSFNFDNEVIQRPNQNNYFAKTYSNEWSELVNKYSDNYKQIIRDNNFHWYNNIYYLKNIKLKIESSYIAHAFSSTFRYPGIRNSWSSDIHSEQRFYFHSQAISNFFPRDGHTNEKWTEVPSRNIEITGTNPDGSWNKSWYKPDNPYFWDLTKPSHKKAYFIEAKFVHMWGSTLRMIKPTPEDVIRNIKWLRKGNNGNYVIDFNAPMWYYLGQESRGFFADWKNNIFVAPDFWWGLAMTPIRAYRFWWDLELVKVPPVFEQNNAQWNEPFPGRSSWFFSINSNKQVDAHWMSINEFKEKMKKDRKIIEAFTNNREITQTILRLGNGLVVRPETEDSRREAFNSKWDIFKHTPILPEQEVVHHQISFYLRQNNPDEVLPISFSNLSKLWISQLEFDINSLVSQTEKTLNKETIGTKIKPTIKFKDKFINAIKEVSLINQRIDESIDKNEALKSFNISTNNQSNFYPNLDYLYNLLQMSPNNKEELFFIRNLPRMVKTIFDRSTLTVKVKIGNSVNEITLLRNNKNYFDLSSIEEFLTEKQKADNEMNIEFLALNFFVDGYESENISNYSVEPLFDSIKKLSTIKRTKDGFEYKFKYRKDFNEQRWIAKDFRIPLNKNVQNFNVAELKKRNEKFNDYEKRQMAFIIKNSFKSKDKNIDLDINSNSLTFVDNPKKYFKHLEPTNEKKGIFYVLAEINNSNELFKYGSESDSEIIKDKMYFLSQNQKNPKLRTYLFKFHTNKLFVDKNDLGFKLEKDKVFLSVDNLKIAELDLKSSSFKFLEDYQLDFHEPFSLNDEQLLVDKLNITLSEKRLQTTKNVRFNLKNKFINIHLVENKNQFNLVFDVDVRSKKLFIKGVNNDNQVFSISYDLKITNNQTLLIVDANGFDNSIWFDITSENQTQLFKALSFYLKQNNLQFKRVPDFNLKSQDKSYEVDKLEKNEIKKQDTNVELILWVIFGIIISLMISSAVLFLKWRKKKIVKKRN</sequence>
<name>Y414_MYCGE</name>
<comment type="subcellular location">
    <subcellularLocation>
        <location evidence="2">Cell membrane</location>
        <topology evidence="2">Multi-pass membrane protein</topology>
    </subcellularLocation>
</comment>
<comment type="similarity">
    <text evidence="2">Belongs to the MG414/MG415 family.</text>
</comment>
<dbReference type="EMBL" id="L43967">
    <property type="protein sequence ID" value="AAC71641.1"/>
    <property type="molecule type" value="Genomic_DNA"/>
</dbReference>
<dbReference type="EMBL" id="U01695">
    <property type="protein sequence ID" value="AAB01008.1"/>
    <property type="molecule type" value="Genomic_DNA"/>
</dbReference>
<dbReference type="EMBL" id="U01804">
    <property type="protein sequence ID" value="AAD12330.1"/>
    <property type="molecule type" value="Genomic_DNA"/>
</dbReference>
<dbReference type="PIR" id="H64245">
    <property type="entry name" value="H64245"/>
</dbReference>
<dbReference type="RefSeq" id="WP_010869473.1">
    <property type="nucleotide sequence ID" value="NC_000908.2"/>
</dbReference>
<dbReference type="STRING" id="243273.MG_414"/>
<dbReference type="GeneID" id="88282598"/>
<dbReference type="KEGG" id="mge:MG_414"/>
<dbReference type="eggNOG" id="ENOG5030N8P">
    <property type="taxonomic scope" value="Bacteria"/>
</dbReference>
<dbReference type="HOGENOM" id="CLU_293346_0_0_14"/>
<dbReference type="InParanoid" id="P47653"/>
<dbReference type="OrthoDB" id="9969407at2"/>
<dbReference type="BioCyc" id="MGEN243273:G1GJ2-510-MONOMER"/>
<dbReference type="Proteomes" id="UP000000807">
    <property type="component" value="Chromosome"/>
</dbReference>
<dbReference type="GO" id="GO:0005886">
    <property type="term" value="C:plasma membrane"/>
    <property type="evidence" value="ECO:0007669"/>
    <property type="project" value="UniProtKB-SubCell"/>
</dbReference>